<feature type="chain" id="PRO_0000383140" description="Elongation factor 2">
    <location>
        <begin position="1"/>
        <end position="850"/>
    </location>
</feature>
<feature type="domain" description="tr-type G" evidence="2">
    <location>
        <begin position="17"/>
        <end position="351"/>
    </location>
</feature>
<feature type="binding site" evidence="1">
    <location>
        <begin position="26"/>
        <end position="33"/>
    </location>
    <ligand>
        <name>GTP</name>
        <dbReference type="ChEBI" id="CHEBI:37565"/>
    </ligand>
</feature>
<feature type="binding site" evidence="1">
    <location>
        <begin position="159"/>
        <end position="162"/>
    </location>
    <ligand>
        <name>GTP</name>
        <dbReference type="ChEBI" id="CHEBI:37565"/>
    </ligand>
</feature>
<feature type="binding site" evidence="1">
    <location>
        <begin position="213"/>
        <end position="215"/>
    </location>
    <ligand>
        <name>GTP</name>
        <dbReference type="ChEBI" id="CHEBI:37565"/>
    </ligand>
</feature>
<feature type="modified residue" description="Diphthamide" evidence="1">
    <location>
        <position position="707"/>
    </location>
</feature>
<comment type="function">
    <text evidence="1">Catalyzes the GTP-dependent ribosomal translocation step during translation elongation. During this step, the ribosome changes from the pre-translocational (PRE) to the post-translocational (POST) state as the newly formed A-site-bound peptidyl-tRNA and P-site-bound deacylated tRNA move to the P and E sites, respectively. Catalyzes the coordinated movement of the two tRNA molecules, the mRNA and conformational changes in the ribosome.</text>
</comment>
<comment type="catalytic activity">
    <reaction evidence="1">
        <text>GTP + H2O = GDP + phosphate + H(+)</text>
        <dbReference type="Rhea" id="RHEA:19669"/>
        <dbReference type="ChEBI" id="CHEBI:15377"/>
        <dbReference type="ChEBI" id="CHEBI:15378"/>
        <dbReference type="ChEBI" id="CHEBI:37565"/>
        <dbReference type="ChEBI" id="CHEBI:43474"/>
        <dbReference type="ChEBI" id="CHEBI:58189"/>
    </reaction>
    <physiologicalReaction direction="left-to-right" evidence="1">
        <dbReference type="Rhea" id="RHEA:19670"/>
    </physiologicalReaction>
</comment>
<comment type="pathway">
    <text>Protein biosynthesis; polypeptide chain elongation.</text>
</comment>
<comment type="subcellular location">
    <subcellularLocation>
        <location evidence="1">Cytoplasm</location>
    </subcellularLocation>
</comment>
<comment type="developmental stage">
    <text evidence="3">Expressed in late sporogonial stages.</text>
</comment>
<comment type="similarity">
    <text evidence="2">Belongs to the TRAFAC class translation factor GTPase superfamily. Classic translation factor GTPase family. EF-G/EF-2 subfamily.</text>
</comment>
<accession>Q8SQT7</accession>
<name>EF2_ENCCU</name>
<keyword id="KW-0963">Cytoplasm</keyword>
<keyword id="KW-0251">Elongation factor</keyword>
<keyword id="KW-0342">GTP-binding</keyword>
<keyword id="KW-0378">Hydrolase</keyword>
<keyword id="KW-0547">Nucleotide-binding</keyword>
<keyword id="KW-0648">Protein biosynthesis</keyword>
<keyword id="KW-1185">Reference proteome</keyword>
<keyword id="KW-0694">RNA-binding</keyword>
<keyword id="KW-0699">rRNA-binding</keyword>
<sequence>MADFHISKVHELMMNQKNIRNISVIAHVDHGKSTLTDCLVIKAKIVSKDSGGGRYMDSREDEQQRGITIKSSAISLHFQVQKDVLEAYTKEGDTNGTEFLINLIDSPGHVDFSSEVTAALRVTDGALVVVDCVDGICVQTETVLGQAMNERIIPTLVLNKLDRAILELEYPQEKLGEVLRRRVEGFNAKLSTLGYNFKVESLLPEKNEISFCSGLQGWGFTLRQFARFYLEKFNMNGFEGERKLTNFLWSHKVSCTSDDPFDASIKHIAKPNPARSPFVVYVLNPIYKVKELCNNGKVEEIKEYLKFYKVDFKGVVLTGSGKSLFKEVMKTWLPAADCILEQIALKLPSPLQSQKLRYDYLYEGPADDEVANAIKMCDGSDEAPVSMYVSKMIPSNDNRFIAFGRVFSGKIFPGMKIRVQEPGYSPGSEELSNTSLIHNKSVLRTVVMMGRGYKDVPNCPAGNIIGIIGIDDCLKKTGTITNREAAHNIRSMKFSVSPVVKVAVSAKRPEDLGKLQEGLNKLAQSDPLCVVERNDKGQNTIACAGSLHLEICLKDLQDQYAKVPIIADDPLVTYFEGISCAVSDSKMTKSANKHNRIYMTVEPLDQNIVDNLKDVKSDQAKTMATNFREKLDIRDDWIRKIWCYAPEVNPLNLLVDGTKGISIINEIKEHVNTGFRAAVNDGPLIGEVMRGLKFELKDAVLHADAIHRGINQLLQPVKNLCKGLLLAAGPILYEPIYEVEITTPNDYSGAVTTILLSKRGTAEDFKTLPGNDTTMITGTLPVKESFTFNEDLKSGSRGKAGASMRFSHYSILPGNLEDPNSLMFKTVEAVRKLKKMNPAPPTPDSFFDRL</sequence>
<organism>
    <name type="scientific">Encephalitozoon cuniculi (strain GB-M1)</name>
    <name type="common">Microsporidian parasite</name>
    <dbReference type="NCBI Taxonomy" id="284813"/>
    <lineage>
        <taxon>Eukaryota</taxon>
        <taxon>Fungi</taxon>
        <taxon>Fungi incertae sedis</taxon>
        <taxon>Microsporidia</taxon>
        <taxon>Unikaryonidae</taxon>
        <taxon>Encephalitozoon</taxon>
    </lineage>
</organism>
<gene>
    <name type="primary">EFT1</name>
    <name type="ordered locus">ECU11_1460</name>
</gene>
<protein>
    <recommendedName>
        <fullName>Elongation factor 2</fullName>
        <shortName>EF-2</shortName>
        <ecNumber evidence="1">3.6.5.-</ecNumber>
    </recommendedName>
    <alternativeName>
        <fullName>Eukaryotic elongation factor 2</fullName>
        <shortName>eEF2</shortName>
    </alternativeName>
    <alternativeName>
        <fullName>Ribosomal translocase</fullName>
    </alternativeName>
    <alternativeName>
        <fullName>Translation elongation factor 2</fullName>
    </alternativeName>
</protein>
<proteinExistence type="evidence at protein level"/>
<evidence type="ECO:0000250" key="1">
    <source>
        <dbReference type="UniProtKB" id="P32324"/>
    </source>
</evidence>
<evidence type="ECO:0000255" key="2">
    <source>
        <dbReference type="PROSITE-ProRule" id="PRU01059"/>
    </source>
</evidence>
<evidence type="ECO:0000269" key="3">
    <source>
    </source>
</evidence>
<dbReference type="EC" id="3.6.5.-" evidence="1"/>
<dbReference type="EMBL" id="AL590450">
    <property type="protein sequence ID" value="CAD26056.1"/>
    <property type="molecule type" value="Genomic_DNA"/>
</dbReference>
<dbReference type="RefSeq" id="NP_586452.1">
    <property type="nucleotide sequence ID" value="NM_001042285.1"/>
</dbReference>
<dbReference type="SMR" id="Q8SQT7"/>
<dbReference type="FunCoup" id="Q8SQT7">
    <property type="interactions" value="225"/>
</dbReference>
<dbReference type="STRING" id="284813.Q8SQT7"/>
<dbReference type="GeneID" id="860106"/>
<dbReference type="KEGG" id="ecu:ECU11_1460"/>
<dbReference type="VEuPathDB" id="MicrosporidiaDB:ECU11_1460"/>
<dbReference type="HOGENOM" id="CLU_002794_11_2_1"/>
<dbReference type="InParanoid" id="Q8SQT7"/>
<dbReference type="OMA" id="ASWNTEN"/>
<dbReference type="OrthoDB" id="364892at2759"/>
<dbReference type="UniPathway" id="UPA00345"/>
<dbReference type="Proteomes" id="UP000000819">
    <property type="component" value="Chromosome XI"/>
</dbReference>
<dbReference type="GO" id="GO:0005829">
    <property type="term" value="C:cytosol"/>
    <property type="evidence" value="ECO:0007669"/>
    <property type="project" value="TreeGrafter"/>
</dbReference>
<dbReference type="GO" id="GO:1990904">
    <property type="term" value="C:ribonucleoprotein complex"/>
    <property type="evidence" value="ECO:0007669"/>
    <property type="project" value="TreeGrafter"/>
</dbReference>
<dbReference type="GO" id="GO:0005525">
    <property type="term" value="F:GTP binding"/>
    <property type="evidence" value="ECO:0007669"/>
    <property type="project" value="UniProtKB-KW"/>
</dbReference>
<dbReference type="GO" id="GO:0003924">
    <property type="term" value="F:GTPase activity"/>
    <property type="evidence" value="ECO:0007669"/>
    <property type="project" value="InterPro"/>
</dbReference>
<dbReference type="GO" id="GO:0019843">
    <property type="term" value="F:rRNA binding"/>
    <property type="evidence" value="ECO:0007669"/>
    <property type="project" value="UniProtKB-KW"/>
</dbReference>
<dbReference type="GO" id="GO:0003746">
    <property type="term" value="F:translation elongation factor activity"/>
    <property type="evidence" value="ECO:0007669"/>
    <property type="project" value="UniProtKB-KW"/>
</dbReference>
<dbReference type="CDD" id="cd01681">
    <property type="entry name" value="aeEF2_snRNP_like_IV"/>
    <property type="match status" value="1"/>
</dbReference>
<dbReference type="CDD" id="cd04096">
    <property type="entry name" value="eEF2_snRNP_like_C"/>
    <property type="match status" value="1"/>
</dbReference>
<dbReference type="CDD" id="cd01885">
    <property type="entry name" value="EF2"/>
    <property type="match status" value="1"/>
</dbReference>
<dbReference type="CDD" id="cd16268">
    <property type="entry name" value="EF2_II"/>
    <property type="match status" value="1"/>
</dbReference>
<dbReference type="CDD" id="cd16261">
    <property type="entry name" value="EF2_snRNP_III"/>
    <property type="match status" value="1"/>
</dbReference>
<dbReference type="FunFam" id="2.40.30.10:FF:000010">
    <property type="entry name" value="Translation elongation factor 2"/>
    <property type="match status" value="1"/>
</dbReference>
<dbReference type="FunFam" id="3.30.70.870:FF:000002">
    <property type="entry name" value="Translation elongation factor 2"/>
    <property type="match status" value="1"/>
</dbReference>
<dbReference type="FunFam" id="3.40.50.300:FF:000058">
    <property type="entry name" value="Translation elongation factor 2"/>
    <property type="match status" value="1"/>
</dbReference>
<dbReference type="Gene3D" id="3.30.230.10">
    <property type="match status" value="1"/>
</dbReference>
<dbReference type="Gene3D" id="3.30.70.240">
    <property type="match status" value="1"/>
</dbReference>
<dbReference type="Gene3D" id="3.30.70.870">
    <property type="entry name" value="Elongation Factor G (Translational Gtpase), domain 3"/>
    <property type="match status" value="1"/>
</dbReference>
<dbReference type="Gene3D" id="3.40.50.300">
    <property type="entry name" value="P-loop containing nucleotide triphosphate hydrolases"/>
    <property type="match status" value="1"/>
</dbReference>
<dbReference type="Gene3D" id="2.40.30.10">
    <property type="entry name" value="Translation factors"/>
    <property type="match status" value="1"/>
</dbReference>
<dbReference type="InterPro" id="IPR041095">
    <property type="entry name" value="EFG_II"/>
</dbReference>
<dbReference type="InterPro" id="IPR035647">
    <property type="entry name" value="EFG_III/V"/>
</dbReference>
<dbReference type="InterPro" id="IPR000640">
    <property type="entry name" value="EFG_V-like"/>
</dbReference>
<dbReference type="InterPro" id="IPR004161">
    <property type="entry name" value="EFTu-like_2"/>
</dbReference>
<dbReference type="InterPro" id="IPR031157">
    <property type="entry name" value="G_TR_CS"/>
</dbReference>
<dbReference type="InterPro" id="IPR027417">
    <property type="entry name" value="P-loop_NTPase"/>
</dbReference>
<dbReference type="InterPro" id="IPR020568">
    <property type="entry name" value="Ribosomal_Su5_D2-typ_SF"/>
</dbReference>
<dbReference type="InterPro" id="IPR014721">
    <property type="entry name" value="Ribsml_uS5_D2-typ_fold_subgr"/>
</dbReference>
<dbReference type="InterPro" id="IPR005225">
    <property type="entry name" value="Small_GTP-bd"/>
</dbReference>
<dbReference type="InterPro" id="IPR000795">
    <property type="entry name" value="T_Tr_GTP-bd_dom"/>
</dbReference>
<dbReference type="InterPro" id="IPR009000">
    <property type="entry name" value="Transl_B-barrel_sf"/>
</dbReference>
<dbReference type="InterPro" id="IPR005517">
    <property type="entry name" value="Transl_elong_EFG/EF2_IV"/>
</dbReference>
<dbReference type="NCBIfam" id="TIGR00231">
    <property type="entry name" value="small_GTP"/>
    <property type="match status" value="1"/>
</dbReference>
<dbReference type="PANTHER" id="PTHR42908:SF3">
    <property type="entry name" value="ELONGATION FACTOR-LIKE GTPASE 1"/>
    <property type="match status" value="1"/>
</dbReference>
<dbReference type="PANTHER" id="PTHR42908">
    <property type="entry name" value="TRANSLATION ELONGATION FACTOR-RELATED"/>
    <property type="match status" value="1"/>
</dbReference>
<dbReference type="Pfam" id="PF00679">
    <property type="entry name" value="EFG_C"/>
    <property type="match status" value="1"/>
</dbReference>
<dbReference type="Pfam" id="PF14492">
    <property type="entry name" value="EFG_III"/>
    <property type="match status" value="1"/>
</dbReference>
<dbReference type="Pfam" id="PF03764">
    <property type="entry name" value="EFG_IV"/>
    <property type="match status" value="1"/>
</dbReference>
<dbReference type="Pfam" id="PF00009">
    <property type="entry name" value="GTP_EFTU"/>
    <property type="match status" value="1"/>
</dbReference>
<dbReference type="Pfam" id="PF03144">
    <property type="entry name" value="GTP_EFTU_D2"/>
    <property type="match status" value="1"/>
</dbReference>
<dbReference type="PRINTS" id="PR00315">
    <property type="entry name" value="ELONGATNFCT"/>
</dbReference>
<dbReference type="SMART" id="SM00838">
    <property type="entry name" value="EFG_C"/>
    <property type="match status" value="1"/>
</dbReference>
<dbReference type="SMART" id="SM00889">
    <property type="entry name" value="EFG_IV"/>
    <property type="match status" value="1"/>
</dbReference>
<dbReference type="SUPFAM" id="SSF54980">
    <property type="entry name" value="EF-G C-terminal domain-like"/>
    <property type="match status" value="2"/>
</dbReference>
<dbReference type="SUPFAM" id="SSF52540">
    <property type="entry name" value="P-loop containing nucleoside triphosphate hydrolases"/>
    <property type="match status" value="1"/>
</dbReference>
<dbReference type="SUPFAM" id="SSF54211">
    <property type="entry name" value="Ribosomal protein S5 domain 2-like"/>
    <property type="match status" value="1"/>
</dbReference>
<dbReference type="SUPFAM" id="SSF50447">
    <property type="entry name" value="Translation proteins"/>
    <property type="match status" value="1"/>
</dbReference>
<dbReference type="PROSITE" id="PS00301">
    <property type="entry name" value="G_TR_1"/>
    <property type="match status" value="1"/>
</dbReference>
<dbReference type="PROSITE" id="PS51722">
    <property type="entry name" value="G_TR_2"/>
    <property type="match status" value="1"/>
</dbReference>
<reference key="1">
    <citation type="journal article" date="2001" name="Nature">
        <title>Genome sequence and gene compaction of the eukaryote parasite Encephalitozoon cuniculi.</title>
        <authorList>
            <person name="Katinka M.D."/>
            <person name="Duprat S."/>
            <person name="Cornillot E."/>
            <person name="Metenier G."/>
            <person name="Thomarat F."/>
            <person name="Prensier G."/>
            <person name="Barbe V."/>
            <person name="Peyretaillade E."/>
            <person name="Brottier P."/>
            <person name="Wincker P."/>
            <person name="Delbac F."/>
            <person name="El Alaoui H."/>
            <person name="Peyret P."/>
            <person name="Saurin W."/>
            <person name="Gouy M."/>
            <person name="Weissenbach J."/>
            <person name="Vivares C.P."/>
        </authorList>
    </citation>
    <scope>NUCLEOTIDE SEQUENCE [LARGE SCALE GENOMIC DNA]</scope>
    <source>
        <strain>GB-M1</strain>
    </source>
</reference>
<reference key="2">
    <citation type="journal article" date="2006" name="Proteomics">
        <title>Proteomic analysis of the eukaryotic parasite Encephalitozoon cuniculi (microsporidia): a reference map for proteins expressed in late sporogonial stages.</title>
        <authorList>
            <person name="Brosson D."/>
            <person name="Kuhn L."/>
            <person name="Delbac F."/>
            <person name="Garin J."/>
            <person name="Vivares C.P."/>
            <person name="Texier C."/>
        </authorList>
    </citation>
    <scope>IDENTIFICATION BY MASS SPECTROMETRY [LARGE SCALE ANALYSIS]</scope>
    <scope>DEVELOPMENTAL STAGE</scope>
</reference>